<evidence type="ECO:0000255" key="1">
    <source>
        <dbReference type="HAMAP-Rule" id="MF_00689"/>
    </source>
</evidence>
<dbReference type="EC" id="2.3.2.29" evidence="1"/>
<dbReference type="EMBL" id="AM181176">
    <property type="protein sequence ID" value="CAY50110.1"/>
    <property type="molecule type" value="Genomic_DNA"/>
</dbReference>
<dbReference type="RefSeq" id="WP_012724939.1">
    <property type="nucleotide sequence ID" value="NC_012660.1"/>
</dbReference>
<dbReference type="SMR" id="C3JY60"/>
<dbReference type="STRING" id="294.SRM1_03430"/>
<dbReference type="eggNOG" id="COG2935">
    <property type="taxonomic scope" value="Bacteria"/>
</dbReference>
<dbReference type="HOGENOM" id="CLU_077607_0_0_6"/>
<dbReference type="OrthoDB" id="9782022at2"/>
<dbReference type="GO" id="GO:0005737">
    <property type="term" value="C:cytoplasm"/>
    <property type="evidence" value="ECO:0007669"/>
    <property type="project" value="UniProtKB-SubCell"/>
</dbReference>
<dbReference type="GO" id="GO:0004057">
    <property type="term" value="F:arginyl-tRNA--protein transferase activity"/>
    <property type="evidence" value="ECO:0007669"/>
    <property type="project" value="InterPro"/>
</dbReference>
<dbReference type="GO" id="GO:0008914">
    <property type="term" value="F:leucyl-tRNA--protein transferase activity"/>
    <property type="evidence" value="ECO:0007669"/>
    <property type="project" value="UniProtKB-UniRule"/>
</dbReference>
<dbReference type="GO" id="GO:0071596">
    <property type="term" value="P:ubiquitin-dependent protein catabolic process via the N-end rule pathway"/>
    <property type="evidence" value="ECO:0007669"/>
    <property type="project" value="InterPro"/>
</dbReference>
<dbReference type="HAMAP" id="MF_00689">
    <property type="entry name" value="Bpt"/>
    <property type="match status" value="1"/>
</dbReference>
<dbReference type="InterPro" id="IPR016181">
    <property type="entry name" value="Acyl_CoA_acyltransferase"/>
</dbReference>
<dbReference type="InterPro" id="IPR017138">
    <property type="entry name" value="Asp_Glu_LeuTrfase"/>
</dbReference>
<dbReference type="InterPro" id="IPR030700">
    <property type="entry name" value="N-end_Aminoacyl_Trfase"/>
</dbReference>
<dbReference type="InterPro" id="IPR007472">
    <property type="entry name" value="N-end_Aminoacyl_Trfase_C"/>
</dbReference>
<dbReference type="InterPro" id="IPR007471">
    <property type="entry name" value="N-end_Aminoacyl_Trfase_N"/>
</dbReference>
<dbReference type="NCBIfam" id="NF002341">
    <property type="entry name" value="PRK01305.1-1"/>
    <property type="match status" value="1"/>
</dbReference>
<dbReference type="NCBIfam" id="NF002342">
    <property type="entry name" value="PRK01305.1-3"/>
    <property type="match status" value="1"/>
</dbReference>
<dbReference type="NCBIfam" id="NF002345">
    <property type="entry name" value="PRK01305.2-2"/>
    <property type="match status" value="1"/>
</dbReference>
<dbReference type="NCBIfam" id="NF002346">
    <property type="entry name" value="PRK01305.2-3"/>
    <property type="match status" value="1"/>
</dbReference>
<dbReference type="PANTHER" id="PTHR21367">
    <property type="entry name" value="ARGININE-TRNA-PROTEIN TRANSFERASE 1"/>
    <property type="match status" value="1"/>
</dbReference>
<dbReference type="PANTHER" id="PTHR21367:SF1">
    <property type="entry name" value="ARGINYL-TRNA--PROTEIN TRANSFERASE 1"/>
    <property type="match status" value="1"/>
</dbReference>
<dbReference type="Pfam" id="PF04377">
    <property type="entry name" value="ATE_C"/>
    <property type="match status" value="1"/>
</dbReference>
<dbReference type="Pfam" id="PF04376">
    <property type="entry name" value="ATE_N"/>
    <property type="match status" value="1"/>
</dbReference>
<dbReference type="PIRSF" id="PIRSF037208">
    <property type="entry name" value="ATE_pro_prd"/>
    <property type="match status" value="1"/>
</dbReference>
<dbReference type="SUPFAM" id="SSF55729">
    <property type="entry name" value="Acyl-CoA N-acyltransferases (Nat)"/>
    <property type="match status" value="1"/>
</dbReference>
<comment type="function">
    <text evidence="1">Functions in the N-end rule pathway of protein degradation where it conjugates Leu from its aminoacyl-tRNA to the N-termini of proteins containing an N-terminal aspartate or glutamate.</text>
</comment>
<comment type="catalytic activity">
    <reaction evidence="1">
        <text>N-terminal L-glutamyl-[protein] + L-leucyl-tRNA(Leu) = N-terminal L-leucyl-L-glutamyl-[protein] + tRNA(Leu) + H(+)</text>
        <dbReference type="Rhea" id="RHEA:50412"/>
        <dbReference type="Rhea" id="RHEA-COMP:9613"/>
        <dbReference type="Rhea" id="RHEA-COMP:9622"/>
        <dbReference type="Rhea" id="RHEA-COMP:12664"/>
        <dbReference type="Rhea" id="RHEA-COMP:12668"/>
        <dbReference type="ChEBI" id="CHEBI:15378"/>
        <dbReference type="ChEBI" id="CHEBI:64721"/>
        <dbReference type="ChEBI" id="CHEBI:78442"/>
        <dbReference type="ChEBI" id="CHEBI:78494"/>
        <dbReference type="ChEBI" id="CHEBI:133041"/>
        <dbReference type="EC" id="2.3.2.29"/>
    </reaction>
</comment>
<comment type="catalytic activity">
    <reaction evidence="1">
        <text>N-terminal L-aspartyl-[protein] + L-leucyl-tRNA(Leu) = N-terminal L-leucyl-L-aspartyl-[protein] + tRNA(Leu) + H(+)</text>
        <dbReference type="Rhea" id="RHEA:50420"/>
        <dbReference type="Rhea" id="RHEA-COMP:9613"/>
        <dbReference type="Rhea" id="RHEA-COMP:9622"/>
        <dbReference type="Rhea" id="RHEA-COMP:12669"/>
        <dbReference type="Rhea" id="RHEA-COMP:12674"/>
        <dbReference type="ChEBI" id="CHEBI:15378"/>
        <dbReference type="ChEBI" id="CHEBI:64720"/>
        <dbReference type="ChEBI" id="CHEBI:78442"/>
        <dbReference type="ChEBI" id="CHEBI:78494"/>
        <dbReference type="ChEBI" id="CHEBI:133042"/>
        <dbReference type="EC" id="2.3.2.29"/>
    </reaction>
</comment>
<comment type="subcellular location">
    <subcellularLocation>
        <location evidence="1">Cytoplasm</location>
    </subcellularLocation>
</comment>
<comment type="similarity">
    <text evidence="1">Belongs to the R-transferase family. Bpt subfamily.</text>
</comment>
<reference key="1">
    <citation type="journal article" date="2009" name="Genome Biol.">
        <title>Genomic and genetic analyses of diversity and plant interactions of Pseudomonas fluorescens.</title>
        <authorList>
            <person name="Silby M.W."/>
            <person name="Cerdeno-Tarraga A.M."/>
            <person name="Vernikos G.S."/>
            <person name="Giddens S.R."/>
            <person name="Jackson R.W."/>
            <person name="Preston G.M."/>
            <person name="Zhang X.-X."/>
            <person name="Moon C.D."/>
            <person name="Gehrig S.M."/>
            <person name="Godfrey S.A.C."/>
            <person name="Knight C.G."/>
            <person name="Malone J.G."/>
            <person name="Robinson Z."/>
            <person name="Spiers A.J."/>
            <person name="Harris S."/>
            <person name="Challis G.L."/>
            <person name="Yaxley A.M."/>
            <person name="Harris D."/>
            <person name="Seeger K."/>
            <person name="Murphy L."/>
            <person name="Rutter S."/>
            <person name="Squares R."/>
            <person name="Quail M.A."/>
            <person name="Saunders E."/>
            <person name="Mavromatis K."/>
            <person name="Brettin T.S."/>
            <person name="Bentley S.D."/>
            <person name="Hothersall J."/>
            <person name="Stephens E."/>
            <person name="Thomas C.M."/>
            <person name="Parkhill J."/>
            <person name="Levy S.B."/>
            <person name="Rainey P.B."/>
            <person name="Thomson N.R."/>
        </authorList>
    </citation>
    <scope>NUCLEOTIDE SEQUENCE [LARGE SCALE GENOMIC DNA]</scope>
    <source>
        <strain>SBW25</strain>
    </source>
</reference>
<keyword id="KW-0012">Acyltransferase</keyword>
<keyword id="KW-0963">Cytoplasm</keyword>
<keyword id="KW-0808">Transferase</keyword>
<organism>
    <name type="scientific">Pseudomonas fluorescens (strain SBW25)</name>
    <dbReference type="NCBI Taxonomy" id="216595"/>
    <lineage>
        <taxon>Bacteria</taxon>
        <taxon>Pseudomonadati</taxon>
        <taxon>Pseudomonadota</taxon>
        <taxon>Gammaproteobacteria</taxon>
        <taxon>Pseudomonadales</taxon>
        <taxon>Pseudomonadaceae</taxon>
        <taxon>Pseudomonas</taxon>
    </lineage>
</organism>
<gene>
    <name evidence="1" type="primary">bpt</name>
    <name type="ordered locus">PFLU_3803</name>
</gene>
<accession>C3JY60</accession>
<name>BPT_PSEFS</name>
<feature type="chain" id="PRO_1000212575" description="Aspartate/glutamate leucyltransferase">
    <location>
        <begin position="1"/>
        <end position="235"/>
    </location>
</feature>
<sequence>MTELARLKFYATQPHSCSYLPDEQATTLFLDPSQPMDVHVYADLSEMGFRRSGDHLYRPHCQNCNACVPARIPVAQFLPDRNQKRILKRNADLTVMPAKPRFTEEYFDLYQRYIEERHADGDMFPPSRDQFSTFLVRDLPFSRFYEFRADGRLVAVAVTDLLPNGLSAVYTFYEPAEERRSLGRFAILWQIGEALRQELEAVYLGYWIKNCKKMNYKTQYRPIELLINQRWVTLN</sequence>
<proteinExistence type="inferred from homology"/>
<protein>
    <recommendedName>
        <fullName evidence="1">Aspartate/glutamate leucyltransferase</fullName>
        <ecNumber evidence="1">2.3.2.29</ecNumber>
    </recommendedName>
</protein>